<name>ACTN4_PONAB</name>
<proteinExistence type="evidence at transcript level"/>
<dbReference type="EMBL" id="CR858192">
    <property type="protein sequence ID" value="CAH90431.1"/>
    <property type="molecule type" value="mRNA"/>
</dbReference>
<dbReference type="RefSeq" id="NP_001127286.1">
    <property type="nucleotide sequence ID" value="NM_001133814.1"/>
</dbReference>
<dbReference type="BMRB" id="Q5RCS6"/>
<dbReference type="SMR" id="Q5RCS6"/>
<dbReference type="FunCoup" id="Q5RCS6">
    <property type="interactions" value="1147"/>
</dbReference>
<dbReference type="STRING" id="9601.ENSPPYP00000011127"/>
<dbReference type="GeneID" id="100174343"/>
<dbReference type="KEGG" id="pon:100174343"/>
<dbReference type="CTD" id="81"/>
<dbReference type="eggNOG" id="KOG0035">
    <property type="taxonomic scope" value="Eukaryota"/>
</dbReference>
<dbReference type="InParanoid" id="Q5RCS6"/>
<dbReference type="OrthoDB" id="10017054at2759"/>
<dbReference type="Proteomes" id="UP000001595">
    <property type="component" value="Unplaced"/>
</dbReference>
<dbReference type="GO" id="GO:0070161">
    <property type="term" value="C:anchoring junction"/>
    <property type="evidence" value="ECO:0007669"/>
    <property type="project" value="UniProtKB-SubCell"/>
</dbReference>
<dbReference type="GO" id="GO:0005737">
    <property type="term" value="C:cytoplasm"/>
    <property type="evidence" value="ECO:0000250"/>
    <property type="project" value="UniProtKB"/>
</dbReference>
<dbReference type="GO" id="GO:0005634">
    <property type="term" value="C:nucleus"/>
    <property type="evidence" value="ECO:0000250"/>
    <property type="project" value="UniProtKB"/>
</dbReference>
<dbReference type="GO" id="GO:0048471">
    <property type="term" value="C:perinuclear region of cytoplasm"/>
    <property type="evidence" value="ECO:0000250"/>
    <property type="project" value="UniProtKB"/>
</dbReference>
<dbReference type="GO" id="GO:1990904">
    <property type="term" value="C:ribonucleoprotein complex"/>
    <property type="evidence" value="ECO:0000250"/>
    <property type="project" value="UniProtKB"/>
</dbReference>
<dbReference type="GO" id="GO:0001725">
    <property type="term" value="C:stress fiber"/>
    <property type="evidence" value="ECO:0007669"/>
    <property type="project" value="UniProtKB-SubCell"/>
</dbReference>
<dbReference type="GO" id="GO:0003779">
    <property type="term" value="F:actin binding"/>
    <property type="evidence" value="ECO:0007669"/>
    <property type="project" value="UniProtKB-KW"/>
</dbReference>
<dbReference type="GO" id="GO:0005509">
    <property type="term" value="F:calcium ion binding"/>
    <property type="evidence" value="ECO:0007669"/>
    <property type="project" value="InterPro"/>
</dbReference>
<dbReference type="GO" id="GO:0003713">
    <property type="term" value="F:transcription coactivator activity"/>
    <property type="evidence" value="ECO:0000250"/>
    <property type="project" value="UniProtKB"/>
</dbReference>
<dbReference type="GO" id="GO:0035357">
    <property type="term" value="P:peroxisome proliferator activated receptor signaling pathway"/>
    <property type="evidence" value="ECO:0000250"/>
    <property type="project" value="UniProtKB"/>
</dbReference>
<dbReference type="GO" id="GO:0015031">
    <property type="term" value="P:protein transport"/>
    <property type="evidence" value="ECO:0007669"/>
    <property type="project" value="UniProtKB-KW"/>
</dbReference>
<dbReference type="GO" id="GO:0048384">
    <property type="term" value="P:retinoic acid receptor signaling pathway"/>
    <property type="evidence" value="ECO:0000250"/>
    <property type="project" value="UniProtKB"/>
</dbReference>
<dbReference type="CDD" id="cd21214">
    <property type="entry name" value="CH_ACTN_rpt1"/>
    <property type="match status" value="1"/>
</dbReference>
<dbReference type="CDD" id="cd21216">
    <property type="entry name" value="CH_ACTN_rpt2"/>
    <property type="match status" value="1"/>
</dbReference>
<dbReference type="CDD" id="cd00051">
    <property type="entry name" value="EFh"/>
    <property type="match status" value="1"/>
</dbReference>
<dbReference type="CDD" id="cd00176">
    <property type="entry name" value="SPEC"/>
    <property type="match status" value="3"/>
</dbReference>
<dbReference type="FunFam" id="1.10.238.10:FF:000004">
    <property type="entry name" value="Actinin alpha 1"/>
    <property type="match status" value="1"/>
</dbReference>
<dbReference type="FunFam" id="1.10.418.10:FF:000001">
    <property type="entry name" value="Actinin alpha 1"/>
    <property type="match status" value="1"/>
</dbReference>
<dbReference type="FunFam" id="1.20.58.60:FF:000004">
    <property type="entry name" value="Actinin alpha 1"/>
    <property type="match status" value="1"/>
</dbReference>
<dbReference type="FunFam" id="1.20.58.60:FF:000005">
    <property type="entry name" value="Actinin alpha 1"/>
    <property type="match status" value="1"/>
</dbReference>
<dbReference type="FunFam" id="1.10.238.10:FF:000156">
    <property type="entry name" value="Actinin alpha 4"/>
    <property type="match status" value="1"/>
</dbReference>
<dbReference type="FunFam" id="1.10.418.10:FF:000005">
    <property type="entry name" value="Actinin alpha 4"/>
    <property type="match status" value="1"/>
</dbReference>
<dbReference type="FunFam" id="1.20.58.60:FF:000002">
    <property type="entry name" value="Actinin, alpha 1"/>
    <property type="match status" value="1"/>
</dbReference>
<dbReference type="FunFam" id="1.20.58.60:FF:000003">
    <property type="entry name" value="Actinin, alpha 1"/>
    <property type="match status" value="1"/>
</dbReference>
<dbReference type="Gene3D" id="1.20.58.60">
    <property type="match status" value="4"/>
</dbReference>
<dbReference type="Gene3D" id="1.10.418.10">
    <property type="entry name" value="Calponin-like domain"/>
    <property type="match status" value="2"/>
</dbReference>
<dbReference type="Gene3D" id="1.10.238.10">
    <property type="entry name" value="EF-hand"/>
    <property type="match status" value="2"/>
</dbReference>
<dbReference type="InterPro" id="IPR001589">
    <property type="entry name" value="Actinin_actin-bd_CS"/>
</dbReference>
<dbReference type="InterPro" id="IPR001715">
    <property type="entry name" value="CH_dom"/>
</dbReference>
<dbReference type="InterPro" id="IPR036872">
    <property type="entry name" value="CH_dom_sf"/>
</dbReference>
<dbReference type="InterPro" id="IPR011992">
    <property type="entry name" value="EF-hand-dom_pair"/>
</dbReference>
<dbReference type="InterPro" id="IPR014837">
    <property type="entry name" value="EF-hand_Ca_insen"/>
</dbReference>
<dbReference type="InterPro" id="IPR018247">
    <property type="entry name" value="EF_Hand_1_Ca_BS"/>
</dbReference>
<dbReference type="InterPro" id="IPR002048">
    <property type="entry name" value="EF_hand_dom"/>
</dbReference>
<dbReference type="InterPro" id="IPR018159">
    <property type="entry name" value="Spectrin/alpha-actinin"/>
</dbReference>
<dbReference type="InterPro" id="IPR002017">
    <property type="entry name" value="Spectrin_repeat"/>
</dbReference>
<dbReference type="PANTHER" id="PTHR11915">
    <property type="entry name" value="SPECTRIN/FILAMIN RELATED CYTOSKELETAL PROTEIN"/>
    <property type="match status" value="1"/>
</dbReference>
<dbReference type="Pfam" id="PF00307">
    <property type="entry name" value="CH"/>
    <property type="match status" value="2"/>
</dbReference>
<dbReference type="Pfam" id="PF08726">
    <property type="entry name" value="EFhand_Ca_insen"/>
    <property type="match status" value="1"/>
</dbReference>
<dbReference type="Pfam" id="PF00435">
    <property type="entry name" value="Spectrin"/>
    <property type="match status" value="4"/>
</dbReference>
<dbReference type="SMART" id="SM00033">
    <property type="entry name" value="CH"/>
    <property type="match status" value="2"/>
</dbReference>
<dbReference type="SMART" id="SM00054">
    <property type="entry name" value="EFh"/>
    <property type="match status" value="2"/>
</dbReference>
<dbReference type="SMART" id="SM01184">
    <property type="entry name" value="efhand_Ca_insen"/>
    <property type="match status" value="1"/>
</dbReference>
<dbReference type="SMART" id="SM00150">
    <property type="entry name" value="SPEC"/>
    <property type="match status" value="4"/>
</dbReference>
<dbReference type="SUPFAM" id="SSF47576">
    <property type="entry name" value="Calponin-homology domain, CH-domain"/>
    <property type="match status" value="1"/>
</dbReference>
<dbReference type="SUPFAM" id="SSF47473">
    <property type="entry name" value="EF-hand"/>
    <property type="match status" value="1"/>
</dbReference>
<dbReference type="SUPFAM" id="SSF46966">
    <property type="entry name" value="Spectrin repeat"/>
    <property type="match status" value="4"/>
</dbReference>
<dbReference type="PROSITE" id="PS00019">
    <property type="entry name" value="ACTININ_1"/>
    <property type="match status" value="1"/>
</dbReference>
<dbReference type="PROSITE" id="PS00020">
    <property type="entry name" value="ACTININ_2"/>
    <property type="match status" value="1"/>
</dbReference>
<dbReference type="PROSITE" id="PS50021">
    <property type="entry name" value="CH"/>
    <property type="match status" value="2"/>
</dbReference>
<dbReference type="PROSITE" id="PS00018">
    <property type="entry name" value="EF_HAND_1"/>
    <property type="match status" value="1"/>
</dbReference>
<dbReference type="PROSITE" id="PS50222">
    <property type="entry name" value="EF_HAND_2"/>
    <property type="match status" value="2"/>
</dbReference>
<feature type="chain" id="PRO_0000073442" description="Alpha-actinin-4">
    <location>
        <begin position="1"/>
        <end position="911"/>
    </location>
</feature>
<feature type="domain" description="Calponin-homology (CH) 1" evidence="7">
    <location>
        <begin position="50"/>
        <end position="154"/>
    </location>
</feature>
<feature type="domain" description="Calponin-homology (CH) 2" evidence="7">
    <location>
        <begin position="163"/>
        <end position="269"/>
    </location>
</feature>
<feature type="repeat" description="Spectrin 1" evidence="6">
    <location>
        <begin position="293"/>
        <end position="403"/>
    </location>
</feature>
<feature type="repeat" description="Spectrin 2" evidence="6">
    <location>
        <begin position="413"/>
        <end position="518"/>
    </location>
</feature>
<feature type="repeat" description="Spectrin 3" evidence="6">
    <location>
        <begin position="528"/>
        <end position="639"/>
    </location>
</feature>
<feature type="repeat" description="Spectrin 4" evidence="6">
    <location>
        <begin position="649"/>
        <end position="752"/>
    </location>
</feature>
<feature type="domain" description="EF-hand 1" evidence="8">
    <location>
        <begin position="765"/>
        <end position="800"/>
    </location>
</feature>
<feature type="domain" description="EF-hand 2" evidence="8">
    <location>
        <begin position="806"/>
        <end position="841"/>
    </location>
</feature>
<feature type="region of interest" description="Actin-binding">
    <location>
        <begin position="1"/>
        <end position="269"/>
    </location>
</feature>
<feature type="region of interest" description="Disordered" evidence="9">
    <location>
        <begin position="1"/>
        <end position="30"/>
    </location>
</feature>
<feature type="region of interest" description="Interaction with VCL" evidence="1">
    <location>
        <begin position="12"/>
        <end position="26"/>
    </location>
</feature>
<feature type="region of interest" description="Interaction with VCL" evidence="1">
    <location>
        <begin position="40"/>
        <end position="61"/>
    </location>
</feature>
<feature type="region of interest" description="Interaction with VCL" evidence="1">
    <location>
        <begin position="108"/>
        <end position="126"/>
    </location>
</feature>
<feature type="region of interest" description="Polyphosphoinositide (PIP2)-binding" evidence="6">
    <location>
        <begin position="177"/>
        <end position="192"/>
    </location>
</feature>
<feature type="region of interest" description="Mediates interaction with MICALL2" evidence="3">
    <location>
        <begin position="736"/>
        <end position="911"/>
    </location>
</feature>
<feature type="short sequence motif" description="LXXLL motif" evidence="1">
    <location>
        <begin position="84"/>
        <end position="88"/>
    </location>
</feature>
<feature type="binding site" evidence="8">
    <location>
        <position position="778"/>
    </location>
    <ligand>
        <name>Ca(2+)</name>
        <dbReference type="ChEBI" id="CHEBI:29108"/>
    </ligand>
</feature>
<feature type="binding site" evidence="8">
    <location>
        <position position="780"/>
    </location>
    <ligand>
        <name>Ca(2+)</name>
        <dbReference type="ChEBI" id="CHEBI:29108"/>
    </ligand>
</feature>
<feature type="binding site" evidence="8">
    <location>
        <position position="789"/>
    </location>
    <ligand>
        <name>Ca(2+)</name>
        <dbReference type="ChEBI" id="CHEBI:29108"/>
    </ligand>
</feature>
<feature type="modified residue" description="Phosphotyrosine" evidence="2">
    <location>
        <position position="31"/>
    </location>
</feature>
<feature type="modified residue" description="N6-acetyllysine" evidence="1">
    <location>
        <position position="114"/>
    </location>
</feature>
<feature type="modified residue" description="N6-acetyllysine" evidence="2">
    <location>
        <position position="214"/>
    </location>
</feature>
<feature type="modified residue" description="Phosphothreonine" evidence="1">
    <location>
        <position position="249"/>
    </location>
</feature>
<feature type="modified residue" description="N6-acetyllysine" evidence="1">
    <location>
        <position position="592"/>
    </location>
</feature>
<feature type="modified residue" description="N6-acetyllysine" evidence="1">
    <location>
        <position position="625"/>
    </location>
</feature>
<feature type="modified residue" description="Phosphoserine" evidence="2">
    <location>
        <position position="696"/>
    </location>
</feature>
<feature type="modified residue" description="N6-acetyllysine" evidence="3">
    <location>
        <position position="779"/>
    </location>
</feature>
<feature type="modified residue" description="N6-acetyllysine" evidence="3">
    <location>
        <position position="859"/>
    </location>
</feature>
<feature type="modified residue" description="Phosphoserine" evidence="5">
    <location>
        <position position="909"/>
    </location>
</feature>
<accession>Q5RCS6</accession>
<reference key="1">
    <citation type="submission" date="2004-11" db="EMBL/GenBank/DDBJ databases">
        <authorList>
            <consortium name="The German cDNA consortium"/>
        </authorList>
    </citation>
    <scope>NUCLEOTIDE SEQUENCE [LARGE SCALE MRNA]</scope>
    <source>
        <tissue>Heart</tissue>
    </source>
</reference>
<protein>
    <recommendedName>
        <fullName evidence="10">Alpha-actinin-4</fullName>
    </recommendedName>
    <alternativeName>
        <fullName evidence="10">Non-muscle alpha-actinin 4</fullName>
    </alternativeName>
</protein>
<organism>
    <name type="scientific">Pongo abelii</name>
    <name type="common">Sumatran orangutan</name>
    <name type="synonym">Pongo pygmaeus abelii</name>
    <dbReference type="NCBI Taxonomy" id="9601"/>
    <lineage>
        <taxon>Eukaryota</taxon>
        <taxon>Metazoa</taxon>
        <taxon>Chordata</taxon>
        <taxon>Craniata</taxon>
        <taxon>Vertebrata</taxon>
        <taxon>Euteleostomi</taxon>
        <taxon>Mammalia</taxon>
        <taxon>Eutheria</taxon>
        <taxon>Euarchontoglires</taxon>
        <taxon>Primates</taxon>
        <taxon>Haplorrhini</taxon>
        <taxon>Catarrhini</taxon>
        <taxon>Hominidae</taxon>
        <taxon>Pongo</taxon>
    </lineage>
</organism>
<comment type="function">
    <text evidence="1">F-actin cross-linking protein which is thought to anchor actin to a variety of intracellular structures. This is a bundling protein. Probably involved in vesicular trafficking via its association with the CART complex. The CART complex is necessary for efficient transferrin receptor recycling but not for EGFR degradation. Involved in tight junction assembly in epithelial cells probably through interaction with MICALL2. Links MICALL2 to the actin cytoskeleton and recruits it to the tight junctions. May also function as a transcriptional coactivator, stimulating transcription mediated by the nuclear hormone receptors PPARG and RARA. Association with IGSF8 regulates the immune synapse formation and is required for efficient T-cell activation.</text>
</comment>
<comment type="subunit">
    <text evidence="1 3 4">Homodimer; antiparallel. Identified in a IGF2BP1-dependent mRNP granule complex containing untranslated mRNAs (By similarity). Component of the CART complex, at least composed of ACTN4, HGS/HRS, MYO5B and TRIM3 (By similarity). Binds TRIM3 at the N-terminus (By similarity). Interacts with MAGI1 (By similarity). Interacts with PDLIM2 (By similarity). Identified in a complex with CASK, IQGAP1, MAGI2, NPHS1, SPTAN1 and SPTBN1 (By similarity). Interacts with MICALL2 (preferentially in opened conformation); stimulated by RAB13 activation. Interacts with PPARG and RARA (By similarity). Binds to VCL; this interaction triggers VCL conformational changes (By similarity). Interacts with SEPTIN14 (By similarity). Interacts with IGSF8 (By similarity).</text>
</comment>
<comment type="subcellular location">
    <subcellularLocation>
        <location evidence="1">Nucleus</location>
    </subcellularLocation>
    <subcellularLocation>
        <location evidence="1">Cytoplasm</location>
    </subcellularLocation>
    <subcellularLocation>
        <location evidence="3">Cell junction</location>
    </subcellularLocation>
    <subcellularLocation>
        <location evidence="1">Cytoplasm</location>
        <location evidence="1">Cytoskeleton</location>
        <location evidence="1">Stress fiber</location>
    </subcellularLocation>
    <subcellularLocation>
        <location evidence="3">Cytoplasm</location>
        <location evidence="3">Perinuclear region</location>
    </subcellularLocation>
    <text evidence="1 3">Localized in cytoplasmic mRNP granules containing untranslated mRNAs. Expressed in the perinuclear rim and manchette structure in early elongating spermatids during spermiogenesis (By similarity).</text>
</comment>
<comment type="domain">
    <text evidence="1">Contains one Leu-Xaa-Xaa-Leu-Leu (LXXLL) motif that mediates interaction with nuclear receptors.</text>
</comment>
<comment type="similarity">
    <text evidence="10">Belongs to the alpha-actinin family.</text>
</comment>
<gene>
    <name evidence="10" type="primary">ACTN4</name>
</gene>
<keyword id="KW-0007">Acetylation</keyword>
<keyword id="KW-0009">Actin-binding</keyword>
<keyword id="KW-0106">Calcium</keyword>
<keyword id="KW-0965">Cell junction</keyword>
<keyword id="KW-0963">Cytoplasm</keyword>
<keyword id="KW-0206">Cytoskeleton</keyword>
<keyword id="KW-0479">Metal-binding</keyword>
<keyword id="KW-0539">Nucleus</keyword>
<keyword id="KW-0597">Phosphoprotein</keyword>
<keyword id="KW-0653">Protein transport</keyword>
<keyword id="KW-1185">Reference proteome</keyword>
<keyword id="KW-0677">Repeat</keyword>
<keyword id="KW-0813">Transport</keyword>
<evidence type="ECO:0000250" key="1">
    <source>
        <dbReference type="UniProtKB" id="O43707"/>
    </source>
</evidence>
<evidence type="ECO:0000250" key="2">
    <source>
        <dbReference type="UniProtKB" id="P12814"/>
    </source>
</evidence>
<evidence type="ECO:0000250" key="3">
    <source>
        <dbReference type="UniProtKB" id="P57780"/>
    </source>
</evidence>
<evidence type="ECO:0000250" key="4">
    <source>
        <dbReference type="UniProtKB" id="Q9QXQ0"/>
    </source>
</evidence>
<evidence type="ECO:0000250" key="5">
    <source>
        <dbReference type="UniProtKB" id="Q9Z1P2"/>
    </source>
</evidence>
<evidence type="ECO:0000255" key="6"/>
<evidence type="ECO:0000255" key="7">
    <source>
        <dbReference type="PROSITE-ProRule" id="PRU00044"/>
    </source>
</evidence>
<evidence type="ECO:0000255" key="8">
    <source>
        <dbReference type="PROSITE-ProRule" id="PRU00448"/>
    </source>
</evidence>
<evidence type="ECO:0000256" key="9">
    <source>
        <dbReference type="SAM" id="MobiDB-lite"/>
    </source>
</evidence>
<evidence type="ECO:0000305" key="10"/>
<sequence>MVDYHAASQSYQYGPSSAGNGAGGGGSMGDYMAQEDDWDRDLLLDPAWEKQQRKTFTAWCNSHLRKAGTQIENIDEDFRDGLKLMLLLEVISGERLPKPERGKMRVHKINNVNKALDFIASKGVKLVSIGAEEIVDGNAKMTLGMIWTIILRFAIQDISVEETSAKEGLLLWCQRKTAPYKNVNVQNFHISWKDGLAFNALIHRHRPELIEYDKLRKDDPVTNLNNAFEVAEKYLDIPKMLDAEDIVNTARPDEKAIMTYVSSFYHAFSGAQKAETAANRICRVLAVNQENEHLMEDYEKLASDLLEWIRRTIPWLEDRVPQKTIQEMQQKLEDFRDYRRVHKPPKVQEKCQLEINFNTLQTKLRLSNRPAFMPSEGKMVSDINNGWQHLEQAEKGYEEWLLNEIRRLERLDHLAEKFRQKASIHEAWTDGKEAMLKHRDYETATLSDIKALIRKHEAFESDLAAHQDRVEQIAAIAQELNELDYYDSHNVNTRCQKICDQWDALGSLTHSRREALEKTEKQLEAIDQLHLEYAKRAAPFNNWMESAMEDLQDMFIVHTIEEIEGLISAHDQFKSTLPDADREREAILAIHKEAQRIAESNHIKLSGSNPYTTVTPQIINSKWEKVQQLVPKRDHALLEEQSKQQSNEHLRRQFASQANVVGPWIQTKMEEIGRISIEMNGTLEDQLSHLKQYERSIVDYKPNLDLLEQQHQLIQEALIFDNKHTNYTMEHIRVGWEQLLTTIARTINEVENQILTRDAKGISQEQMQEFRASFNHFDKDHGGALGPEEFKACLISLGYDVENDRQGEAEFNRIMSLVDPNHSGLVTFQAFIDFMSRETTDTDTADQVIASFKVLAGDKNFITAEELRRELPPDQAEYCIARMAPYQGPDAVPGALDYKSFSTALYGESDL</sequence>